<comment type="function">
    <text evidence="1">General (non sugar-specific) component of the phosphoenolpyruvate-dependent sugar phosphotransferase system (sugar PTS). This major carbohydrate active-transport system catalyzes the phosphorylation of incoming sugar substrates concomitantly with their translocation across the cell membrane. Enzyme I transfers the phosphoryl group from phosphoenolpyruvate (PEP) to the phosphoryl carrier protein (HPr).</text>
</comment>
<comment type="catalytic activity">
    <reaction evidence="1">
        <text>L-histidyl-[protein] + phosphoenolpyruvate = N(pros)-phospho-L-histidyl-[protein] + pyruvate</text>
        <dbReference type="Rhea" id="RHEA:23880"/>
        <dbReference type="Rhea" id="RHEA-COMP:9745"/>
        <dbReference type="Rhea" id="RHEA-COMP:9746"/>
        <dbReference type="ChEBI" id="CHEBI:15361"/>
        <dbReference type="ChEBI" id="CHEBI:29979"/>
        <dbReference type="ChEBI" id="CHEBI:58702"/>
        <dbReference type="ChEBI" id="CHEBI:64837"/>
        <dbReference type="EC" id="2.7.3.9"/>
    </reaction>
</comment>
<comment type="cofactor">
    <cofactor evidence="1">
        <name>Mg(2+)</name>
        <dbReference type="ChEBI" id="CHEBI:18420"/>
    </cofactor>
</comment>
<comment type="subunit">
    <text evidence="1">Homodimer.</text>
</comment>
<comment type="subcellular location">
    <subcellularLocation>
        <location evidence="3">Cytoplasm</location>
    </subcellularLocation>
</comment>
<comment type="domain">
    <text evidence="1">The N-terminal domain contains the HPr binding site, the central domain the pyrophosphate/phosphate carrier histidine, and the C-terminal domain the pyruvate binding site.</text>
</comment>
<comment type="miscellaneous">
    <text evidence="1">The reaction takes place in three steps, mediated by a phosphocarrier histidine residue located on the surface of the central domain. The two first partial reactions are catalyzed at an active site located on the N-terminal domain, and the third partial reaction is catalyzed at an active site located on the C-terminal domain. For catalytic turnover, the central domain swivels from the concave surface of the N-terminal domain to that of the C-terminal domain.</text>
</comment>
<comment type="similarity">
    <text evidence="3">Belongs to the PEP-utilizing enzyme family.</text>
</comment>
<feature type="chain" id="PRO_0000147061" description="Phosphoenolpyruvate-protein phosphotransferase">
    <location>
        <begin position="1"/>
        <end position="571"/>
    </location>
</feature>
<feature type="active site" description="Tele-phosphohistidine intermediate" evidence="1">
    <location>
        <position position="189"/>
    </location>
</feature>
<feature type="active site" description="Proton donor" evidence="1">
    <location>
        <position position="502"/>
    </location>
</feature>
<feature type="binding site" evidence="2">
    <location>
        <position position="296"/>
    </location>
    <ligand>
        <name>phosphoenolpyruvate</name>
        <dbReference type="ChEBI" id="CHEBI:58702"/>
    </ligand>
</feature>
<feature type="binding site" evidence="1">
    <location>
        <position position="332"/>
    </location>
    <ligand>
        <name>phosphoenolpyruvate</name>
        <dbReference type="ChEBI" id="CHEBI:58702"/>
    </ligand>
</feature>
<feature type="binding site" evidence="1">
    <location>
        <position position="431"/>
    </location>
    <ligand>
        <name>Mg(2+)</name>
        <dbReference type="ChEBI" id="CHEBI:18420"/>
    </ligand>
</feature>
<feature type="binding site" evidence="1">
    <location>
        <begin position="454"/>
        <end position="455"/>
    </location>
    <ligand>
        <name>phosphoenolpyruvate</name>
        <dbReference type="ChEBI" id="CHEBI:58702"/>
    </ligand>
</feature>
<feature type="binding site" evidence="1">
    <location>
        <position position="455"/>
    </location>
    <ligand>
        <name>Mg(2+)</name>
        <dbReference type="ChEBI" id="CHEBI:18420"/>
    </ligand>
</feature>
<feature type="binding site" evidence="2">
    <location>
        <position position="465"/>
    </location>
    <ligand>
        <name>phosphoenolpyruvate</name>
        <dbReference type="ChEBI" id="CHEBI:58702"/>
    </ligand>
</feature>
<feature type="sequence conflict" description="In Ref. 1; BAA76879." evidence="3" ref="1">
    <original>Q</original>
    <variation>H</variation>
    <location>
        <position position="52"/>
    </location>
</feature>
<feature type="sequence conflict" description="In Ref. 1; BAA76879." evidence="3" ref="1">
    <original>T</original>
    <variation>P</variation>
    <location>
        <position position="61"/>
    </location>
</feature>
<feature type="sequence conflict" description="In Ref. 1; BAA76879." evidence="3" ref="1">
    <original>R</original>
    <variation>K</variation>
    <location>
        <position position="559"/>
    </location>
</feature>
<reference key="1">
    <citation type="submission" date="1999-03" db="EMBL/GenBank/DDBJ databases">
        <title>Buchnera sp. DNA for ptsH-ptsI-crr operon.</title>
        <authorList>
            <person name="Matsumoto K."/>
            <person name="Morioka M."/>
            <person name="Ishikawa H."/>
        </authorList>
    </citation>
    <scope>NUCLEOTIDE SEQUENCE [GENOMIC DNA]</scope>
</reference>
<reference key="2">
    <citation type="journal article" date="2000" name="Nature">
        <title>Genome sequence of the endocellular bacterial symbiont of aphids Buchnera sp. APS.</title>
        <authorList>
            <person name="Shigenobu S."/>
            <person name="Watanabe H."/>
            <person name="Hattori M."/>
            <person name="Sakaki Y."/>
            <person name="Ishikawa H."/>
        </authorList>
    </citation>
    <scope>NUCLEOTIDE SEQUENCE [LARGE SCALE GENOMIC DNA]</scope>
    <source>
        <strain>APS</strain>
    </source>
</reference>
<accession>Q9WXI6</accession>
<organism>
    <name type="scientific">Buchnera aphidicola subsp. Acyrthosiphon pisum (strain APS)</name>
    <name type="common">Acyrthosiphon pisum symbiotic bacterium</name>
    <dbReference type="NCBI Taxonomy" id="107806"/>
    <lineage>
        <taxon>Bacteria</taxon>
        <taxon>Pseudomonadati</taxon>
        <taxon>Pseudomonadota</taxon>
        <taxon>Gammaproteobacteria</taxon>
        <taxon>Enterobacterales</taxon>
        <taxon>Erwiniaceae</taxon>
        <taxon>Buchnera</taxon>
    </lineage>
</organism>
<sequence length="571" mass="64386">MISGILASPGIAFGTALLLKEDEIVINRKIINIKNITKEIERFFEGRRKSIQQLTEIKTKTKEKFGEKKESIFEGHIMLLEDEELEQEVISLIKEKNMSAAAATELIIEGQAKALEKLKDEYLKNRAIDVRDIGNRLLKNILNLNIIDLNNINNEVILIAKDLTPSETAQINLKYILGFITDLGSRTSHTSIMARSLEIPAIVGTGNITKIVKNNDFIILDSINNQILINPSHKLINQTEVIKKKYLTKKNQLINLKNLQAITTDGHAIKIGSNIGNVEDIKSAKKNGAECIGLYRTEFLFMGRNCLPDENEQFQAYKTIAELMKNKSVIIRTMDIGGDKDLPYMNLPKEENPFLGWRAIRISMDRKEILHTQLNAILRASAFGKIYILFPMIISVEEIRILKSEVRKLQIQLKNNNIPFDKNIKIGIMIETPASAIIAEYLIKEVDFFSIGTNDLTQYTLAVDRGNDLISHLYNPMNPSVLKLIQQVINVSHTHGKWTGMCGELAGDERATILLLGMGLDEFSMSSISIPKIKEIIRKTSFSSAKKLAQKALTLPTNREILNLVENFVNH</sequence>
<evidence type="ECO:0000250" key="1">
    <source>
        <dbReference type="UniProtKB" id="P08839"/>
    </source>
</evidence>
<evidence type="ECO:0000250" key="2">
    <source>
        <dbReference type="UniProtKB" id="P23533"/>
    </source>
</evidence>
<evidence type="ECO:0000305" key="3"/>
<keyword id="KW-0963">Cytoplasm</keyword>
<keyword id="KW-0418">Kinase</keyword>
<keyword id="KW-0460">Magnesium</keyword>
<keyword id="KW-0479">Metal-binding</keyword>
<keyword id="KW-0598">Phosphotransferase system</keyword>
<keyword id="KW-1185">Reference proteome</keyword>
<keyword id="KW-0762">Sugar transport</keyword>
<keyword id="KW-0808">Transferase</keyword>
<keyword id="KW-0813">Transport</keyword>
<protein>
    <recommendedName>
        <fullName evidence="1">Phosphoenolpyruvate-protein phosphotransferase</fullName>
        <ecNumber evidence="1">2.7.3.9</ecNumber>
    </recommendedName>
    <alternativeName>
        <fullName evidence="1">Phosphotransferase system, enzyme I</fullName>
    </alternativeName>
</protein>
<proteinExistence type="inferred from homology"/>
<dbReference type="EC" id="2.7.3.9" evidence="1"/>
<dbReference type="EMBL" id="AB025229">
    <property type="protein sequence ID" value="BAA76879.1"/>
    <property type="molecule type" value="Genomic_DNA"/>
</dbReference>
<dbReference type="EMBL" id="BA000003">
    <property type="protein sequence ID" value="BAB12787.1"/>
    <property type="molecule type" value="Genomic_DNA"/>
</dbReference>
<dbReference type="RefSeq" id="NP_239901.1">
    <property type="nucleotide sequence ID" value="NC_002528.1"/>
</dbReference>
<dbReference type="RefSeq" id="WP_010895922.1">
    <property type="nucleotide sequence ID" value="NC_002528.1"/>
</dbReference>
<dbReference type="SMR" id="Q9WXI6"/>
<dbReference type="STRING" id="563178.BUAP5A_063"/>
<dbReference type="EnsemblBacteria" id="BAB12787">
    <property type="protein sequence ID" value="BAB12787"/>
    <property type="gene ID" value="BAB12787"/>
</dbReference>
<dbReference type="KEGG" id="buc:BU064"/>
<dbReference type="PATRIC" id="fig|107806.10.peg.73"/>
<dbReference type="eggNOG" id="COG1080">
    <property type="taxonomic scope" value="Bacteria"/>
</dbReference>
<dbReference type="HOGENOM" id="CLU_007308_7_0_6"/>
<dbReference type="Proteomes" id="UP000001806">
    <property type="component" value="Chromosome"/>
</dbReference>
<dbReference type="GO" id="GO:0005737">
    <property type="term" value="C:cytoplasm"/>
    <property type="evidence" value="ECO:0007669"/>
    <property type="project" value="UniProtKB-SubCell"/>
</dbReference>
<dbReference type="GO" id="GO:0016301">
    <property type="term" value="F:kinase activity"/>
    <property type="evidence" value="ECO:0007669"/>
    <property type="project" value="UniProtKB-KW"/>
</dbReference>
<dbReference type="GO" id="GO:0046872">
    <property type="term" value="F:metal ion binding"/>
    <property type="evidence" value="ECO:0007669"/>
    <property type="project" value="UniProtKB-KW"/>
</dbReference>
<dbReference type="GO" id="GO:0008965">
    <property type="term" value="F:phosphoenolpyruvate-protein phosphotransferase activity"/>
    <property type="evidence" value="ECO:0007669"/>
    <property type="project" value="UniProtKB-EC"/>
</dbReference>
<dbReference type="GO" id="GO:0009401">
    <property type="term" value="P:phosphoenolpyruvate-dependent sugar phosphotransferase system"/>
    <property type="evidence" value="ECO:0007669"/>
    <property type="project" value="UniProtKB-KW"/>
</dbReference>
<dbReference type="FunFam" id="3.20.20.60:FF:000007">
    <property type="entry name" value="Phosphoenolpyruvate-protein phosphotransferase"/>
    <property type="match status" value="1"/>
</dbReference>
<dbReference type="Gene3D" id="3.20.20.60">
    <property type="entry name" value="Phosphoenolpyruvate-binding domains"/>
    <property type="match status" value="1"/>
</dbReference>
<dbReference type="Gene3D" id="3.50.30.10">
    <property type="entry name" value="Phosphohistidine domain"/>
    <property type="match status" value="1"/>
</dbReference>
<dbReference type="Gene3D" id="1.10.274.10">
    <property type="entry name" value="PtsI, HPr-binding domain"/>
    <property type="match status" value="1"/>
</dbReference>
<dbReference type="InterPro" id="IPR008279">
    <property type="entry name" value="PEP-util_enz_mobile_dom"/>
</dbReference>
<dbReference type="InterPro" id="IPR050499">
    <property type="entry name" value="PEP-utilizing_PTS_enzyme"/>
</dbReference>
<dbReference type="InterPro" id="IPR000121">
    <property type="entry name" value="PEP_util_C"/>
</dbReference>
<dbReference type="InterPro" id="IPR023151">
    <property type="entry name" value="PEP_util_CS"/>
</dbReference>
<dbReference type="InterPro" id="IPR036637">
    <property type="entry name" value="Phosphohistidine_dom_sf"/>
</dbReference>
<dbReference type="InterPro" id="IPR024692">
    <property type="entry name" value="PTS_EI"/>
</dbReference>
<dbReference type="InterPro" id="IPR006318">
    <property type="entry name" value="PTS_EI-like"/>
</dbReference>
<dbReference type="InterPro" id="IPR008731">
    <property type="entry name" value="PTS_EIN"/>
</dbReference>
<dbReference type="InterPro" id="IPR036618">
    <property type="entry name" value="PtsI_HPr-bd_sf"/>
</dbReference>
<dbReference type="InterPro" id="IPR015813">
    <property type="entry name" value="Pyrv/PenolPyrv_kinase-like_dom"/>
</dbReference>
<dbReference type="InterPro" id="IPR040442">
    <property type="entry name" value="Pyrv_kinase-like_dom_sf"/>
</dbReference>
<dbReference type="NCBIfam" id="NF008382">
    <property type="entry name" value="PRK11177.1"/>
    <property type="match status" value="1"/>
</dbReference>
<dbReference type="NCBIfam" id="TIGR01417">
    <property type="entry name" value="PTS_I_fam"/>
    <property type="match status" value="1"/>
</dbReference>
<dbReference type="PANTHER" id="PTHR46244">
    <property type="entry name" value="PHOSPHOENOLPYRUVATE-PROTEIN PHOSPHOTRANSFERASE"/>
    <property type="match status" value="1"/>
</dbReference>
<dbReference type="PANTHER" id="PTHR46244:SF6">
    <property type="entry name" value="PHOSPHOENOLPYRUVATE-PROTEIN PHOSPHOTRANSFERASE"/>
    <property type="match status" value="1"/>
</dbReference>
<dbReference type="Pfam" id="PF05524">
    <property type="entry name" value="PEP-utilisers_N"/>
    <property type="match status" value="1"/>
</dbReference>
<dbReference type="Pfam" id="PF00391">
    <property type="entry name" value="PEP-utilizers"/>
    <property type="match status" value="1"/>
</dbReference>
<dbReference type="Pfam" id="PF02896">
    <property type="entry name" value="PEP-utilizers_C"/>
    <property type="match status" value="1"/>
</dbReference>
<dbReference type="PIRSF" id="PIRSF000732">
    <property type="entry name" value="PTS_enzyme_I"/>
    <property type="match status" value="1"/>
</dbReference>
<dbReference type="PRINTS" id="PR01736">
    <property type="entry name" value="PHPHTRNFRASE"/>
</dbReference>
<dbReference type="SUPFAM" id="SSF47831">
    <property type="entry name" value="Enzyme I of the PEP:sugar phosphotransferase system HPr-binding (sub)domain"/>
    <property type="match status" value="1"/>
</dbReference>
<dbReference type="SUPFAM" id="SSF51621">
    <property type="entry name" value="Phosphoenolpyruvate/pyruvate domain"/>
    <property type="match status" value="1"/>
</dbReference>
<dbReference type="SUPFAM" id="SSF52009">
    <property type="entry name" value="Phosphohistidine domain"/>
    <property type="match status" value="1"/>
</dbReference>
<dbReference type="PROSITE" id="PS00742">
    <property type="entry name" value="PEP_ENZYMES_2"/>
    <property type="match status" value="1"/>
</dbReference>
<gene>
    <name type="primary">ptsI</name>
    <name type="ordered locus">BU064</name>
</gene>
<name>PT1_BUCAI</name>